<name>ATPB_PINTH</name>
<proteinExistence type="inferred from homology"/>
<accession>P41622</accession>
<feature type="chain" id="PRO_0000144542" description="ATP synthase subunit beta, chloroplastic">
    <location>
        <begin position="1"/>
        <end position="492"/>
    </location>
</feature>
<feature type="binding site" evidence="1">
    <location>
        <begin position="170"/>
        <end position="177"/>
    </location>
    <ligand>
        <name>ATP</name>
        <dbReference type="ChEBI" id="CHEBI:30616"/>
    </ligand>
</feature>
<evidence type="ECO:0000255" key="1">
    <source>
        <dbReference type="HAMAP-Rule" id="MF_01347"/>
    </source>
</evidence>
<dbReference type="EC" id="7.1.2.2" evidence="1"/>
<dbReference type="EMBL" id="D17510">
    <property type="protein sequence ID" value="BAA04370.1"/>
    <property type="molecule type" value="Genomic_DNA"/>
</dbReference>
<dbReference type="PIR" id="T07492">
    <property type="entry name" value="T07492"/>
</dbReference>
<dbReference type="RefSeq" id="NP_042413.1">
    <property type="nucleotide sequence ID" value="NC_001631.1"/>
</dbReference>
<dbReference type="SMR" id="P41622"/>
<dbReference type="GeneID" id="809040"/>
<dbReference type="GO" id="GO:0009535">
    <property type="term" value="C:chloroplast thylakoid membrane"/>
    <property type="evidence" value="ECO:0007669"/>
    <property type="project" value="UniProtKB-SubCell"/>
</dbReference>
<dbReference type="GO" id="GO:0005739">
    <property type="term" value="C:mitochondrion"/>
    <property type="evidence" value="ECO:0007669"/>
    <property type="project" value="GOC"/>
</dbReference>
<dbReference type="GO" id="GO:0045259">
    <property type="term" value="C:proton-transporting ATP synthase complex"/>
    <property type="evidence" value="ECO:0007669"/>
    <property type="project" value="UniProtKB-KW"/>
</dbReference>
<dbReference type="GO" id="GO:0005524">
    <property type="term" value="F:ATP binding"/>
    <property type="evidence" value="ECO:0007669"/>
    <property type="project" value="UniProtKB-UniRule"/>
</dbReference>
<dbReference type="GO" id="GO:0016887">
    <property type="term" value="F:ATP hydrolysis activity"/>
    <property type="evidence" value="ECO:0007669"/>
    <property type="project" value="InterPro"/>
</dbReference>
<dbReference type="GO" id="GO:0046933">
    <property type="term" value="F:proton-transporting ATP synthase activity, rotational mechanism"/>
    <property type="evidence" value="ECO:0007669"/>
    <property type="project" value="UniProtKB-UniRule"/>
</dbReference>
<dbReference type="GO" id="GO:0042776">
    <property type="term" value="P:proton motive force-driven mitochondrial ATP synthesis"/>
    <property type="evidence" value="ECO:0007669"/>
    <property type="project" value="TreeGrafter"/>
</dbReference>
<dbReference type="CDD" id="cd18110">
    <property type="entry name" value="ATP-synt_F1_beta_C"/>
    <property type="match status" value="1"/>
</dbReference>
<dbReference type="CDD" id="cd18115">
    <property type="entry name" value="ATP-synt_F1_beta_N"/>
    <property type="match status" value="1"/>
</dbReference>
<dbReference type="CDD" id="cd01133">
    <property type="entry name" value="F1-ATPase_beta_CD"/>
    <property type="match status" value="1"/>
</dbReference>
<dbReference type="FunFam" id="1.10.1140.10:FF:000001">
    <property type="entry name" value="ATP synthase subunit beta"/>
    <property type="match status" value="1"/>
</dbReference>
<dbReference type="FunFam" id="3.40.50.300:FF:000004">
    <property type="entry name" value="ATP synthase subunit beta"/>
    <property type="match status" value="1"/>
</dbReference>
<dbReference type="FunFam" id="2.40.10.170:FF:000002">
    <property type="entry name" value="ATP synthase subunit beta, chloroplastic"/>
    <property type="match status" value="1"/>
</dbReference>
<dbReference type="Gene3D" id="2.40.10.170">
    <property type="match status" value="1"/>
</dbReference>
<dbReference type="Gene3D" id="1.10.1140.10">
    <property type="entry name" value="Bovine Mitochondrial F1-atpase, Atp Synthase Beta Chain, Chain D, domain 3"/>
    <property type="match status" value="1"/>
</dbReference>
<dbReference type="Gene3D" id="3.40.50.300">
    <property type="entry name" value="P-loop containing nucleotide triphosphate hydrolases"/>
    <property type="match status" value="1"/>
</dbReference>
<dbReference type="HAMAP" id="MF_01347">
    <property type="entry name" value="ATP_synth_beta_bact"/>
    <property type="match status" value="1"/>
</dbReference>
<dbReference type="InterPro" id="IPR003593">
    <property type="entry name" value="AAA+_ATPase"/>
</dbReference>
<dbReference type="InterPro" id="IPR055190">
    <property type="entry name" value="ATP-synt_VA_C"/>
</dbReference>
<dbReference type="InterPro" id="IPR005722">
    <property type="entry name" value="ATP_synth_F1_bsu"/>
</dbReference>
<dbReference type="InterPro" id="IPR020003">
    <property type="entry name" value="ATPase_a/bsu_AS"/>
</dbReference>
<dbReference type="InterPro" id="IPR050053">
    <property type="entry name" value="ATPase_alpha/beta_chains"/>
</dbReference>
<dbReference type="InterPro" id="IPR004100">
    <property type="entry name" value="ATPase_F1/V1/A1_a/bsu_N"/>
</dbReference>
<dbReference type="InterPro" id="IPR036121">
    <property type="entry name" value="ATPase_F1/V1/A1_a/bsu_N_sf"/>
</dbReference>
<dbReference type="InterPro" id="IPR000194">
    <property type="entry name" value="ATPase_F1/V1/A1_a/bsu_nucl-bd"/>
</dbReference>
<dbReference type="InterPro" id="IPR024034">
    <property type="entry name" value="ATPase_F1/V1_b/a_C"/>
</dbReference>
<dbReference type="InterPro" id="IPR027417">
    <property type="entry name" value="P-loop_NTPase"/>
</dbReference>
<dbReference type="NCBIfam" id="TIGR01039">
    <property type="entry name" value="atpD"/>
    <property type="match status" value="1"/>
</dbReference>
<dbReference type="PANTHER" id="PTHR15184">
    <property type="entry name" value="ATP SYNTHASE"/>
    <property type="match status" value="1"/>
</dbReference>
<dbReference type="PANTHER" id="PTHR15184:SF71">
    <property type="entry name" value="ATP SYNTHASE SUBUNIT BETA, MITOCHONDRIAL"/>
    <property type="match status" value="1"/>
</dbReference>
<dbReference type="Pfam" id="PF00006">
    <property type="entry name" value="ATP-synt_ab"/>
    <property type="match status" value="1"/>
</dbReference>
<dbReference type="Pfam" id="PF02874">
    <property type="entry name" value="ATP-synt_ab_N"/>
    <property type="match status" value="1"/>
</dbReference>
<dbReference type="Pfam" id="PF22919">
    <property type="entry name" value="ATP-synt_VA_C"/>
    <property type="match status" value="1"/>
</dbReference>
<dbReference type="SMART" id="SM00382">
    <property type="entry name" value="AAA"/>
    <property type="match status" value="1"/>
</dbReference>
<dbReference type="SUPFAM" id="SSF47917">
    <property type="entry name" value="C-terminal domain of alpha and beta subunits of F1 ATP synthase"/>
    <property type="match status" value="1"/>
</dbReference>
<dbReference type="SUPFAM" id="SSF50615">
    <property type="entry name" value="N-terminal domain of alpha and beta subunits of F1 ATP synthase"/>
    <property type="match status" value="1"/>
</dbReference>
<dbReference type="SUPFAM" id="SSF52540">
    <property type="entry name" value="P-loop containing nucleoside triphosphate hydrolases"/>
    <property type="match status" value="1"/>
</dbReference>
<dbReference type="PROSITE" id="PS00152">
    <property type="entry name" value="ATPASE_ALPHA_BETA"/>
    <property type="match status" value="1"/>
</dbReference>
<keyword id="KW-0066">ATP synthesis</keyword>
<keyword id="KW-0067">ATP-binding</keyword>
<keyword id="KW-0139">CF(1)</keyword>
<keyword id="KW-0150">Chloroplast</keyword>
<keyword id="KW-0375">Hydrogen ion transport</keyword>
<keyword id="KW-0406">Ion transport</keyword>
<keyword id="KW-0472">Membrane</keyword>
<keyword id="KW-0547">Nucleotide-binding</keyword>
<keyword id="KW-0934">Plastid</keyword>
<keyword id="KW-0793">Thylakoid</keyword>
<keyword id="KW-1278">Translocase</keyword>
<keyword id="KW-0813">Transport</keyword>
<comment type="function">
    <text evidence="1">Produces ATP from ADP in the presence of a proton gradient across the membrane. The catalytic sites are hosted primarily by the beta subunits.</text>
</comment>
<comment type="catalytic activity">
    <reaction evidence="1">
        <text>ATP + H2O + 4 H(+)(in) = ADP + phosphate + 5 H(+)(out)</text>
        <dbReference type="Rhea" id="RHEA:57720"/>
        <dbReference type="ChEBI" id="CHEBI:15377"/>
        <dbReference type="ChEBI" id="CHEBI:15378"/>
        <dbReference type="ChEBI" id="CHEBI:30616"/>
        <dbReference type="ChEBI" id="CHEBI:43474"/>
        <dbReference type="ChEBI" id="CHEBI:456216"/>
        <dbReference type="EC" id="7.1.2.2"/>
    </reaction>
</comment>
<comment type="subunit">
    <text evidence="1">F-type ATPases have 2 components, CF(1) - the catalytic core - and CF(0) - the membrane proton channel. CF(1) has five subunits: alpha(3), beta(3), gamma(1), delta(1), epsilon(1). CF(0) has four main subunits: a(1), b(1), b'(1) and c(9-12).</text>
</comment>
<comment type="subcellular location">
    <subcellularLocation>
        <location evidence="1">Plastid</location>
        <location evidence="1">Chloroplast thylakoid membrane</location>
        <topology evidence="1">Peripheral membrane protein</topology>
    </subcellularLocation>
</comment>
<comment type="similarity">
    <text evidence="1">Belongs to the ATPase alpha/beta chains family.</text>
</comment>
<geneLocation type="chloroplast"/>
<reference key="1">
    <citation type="journal article" date="1994" name="Proc. Natl. Acad. Sci. U.S.A.">
        <title>Loss of all ndh genes as determined by sequencing the entire chloroplast genome of the black pine Pinus thunbergii.</title>
        <authorList>
            <person name="Wakasugi T."/>
            <person name="Tsudzuki J."/>
            <person name="Ito S."/>
            <person name="Nakashima K."/>
            <person name="Tsudzuki T."/>
            <person name="Sugiura M."/>
        </authorList>
    </citation>
    <scope>NUCLEOTIDE SEQUENCE [LARGE SCALE GENOMIC DNA]</scope>
</reference>
<protein>
    <recommendedName>
        <fullName evidence="1">ATP synthase subunit beta, chloroplastic</fullName>
        <ecNumber evidence="1">7.1.2.2</ecNumber>
    </recommendedName>
    <alternativeName>
        <fullName evidence="1">ATP synthase F1 sector subunit beta</fullName>
    </alternativeName>
    <alternativeName>
        <fullName evidence="1">F-ATPase subunit beta</fullName>
    </alternativeName>
</protein>
<sequence>MRKNPLVLGVSASVETNVGRIAQIIGPVLDVSFPPGNMPNIYNSLIVKGQGTAGQEIQVTCEVQQLLGNHKVRAVAMSATDGLTRGMRVIDTGAPLSVPVGGATLGRIFNVLGEPVDNLGPVDAGITSPIHRPAPAFTELDTKLSIFETGIKVVDLLAPYRRGGKIGLFGGAGVGKTVLIMELINNIAKAHGGVSVFGGVGERTREGNDLYMEMKESGVIDEQKISESKVALVYGQMNEPPGARMRVGLTALTMAEYFRDVNEQDVLLFIDNIFRFVQAGSEVSALLGRMPSAVGYQPTLSTEMGSLQERITSTKKGSITSIQAVYVPADDLTDPAPATTFAHSDATTVLSRGLAAKGIYPAVDPLDSTSTMLQPWIVGEEHYETAQGVKQTLQRYKELQDIIAIPGLDELSEEDRLIVARARKIERFLSQPFFVAEVFTGSPGKYVGLMETIRGFQMILSGELDGLIEQSFYLVGNIDEATAKAINSSMES</sequence>
<gene>
    <name evidence="1" type="primary">atpB</name>
</gene>
<organism>
    <name type="scientific">Pinus thunbergii</name>
    <name type="common">Japanese black pine</name>
    <name type="synonym">Pinus thunbergiana</name>
    <dbReference type="NCBI Taxonomy" id="3350"/>
    <lineage>
        <taxon>Eukaryota</taxon>
        <taxon>Viridiplantae</taxon>
        <taxon>Streptophyta</taxon>
        <taxon>Embryophyta</taxon>
        <taxon>Tracheophyta</taxon>
        <taxon>Spermatophyta</taxon>
        <taxon>Pinopsida</taxon>
        <taxon>Pinidae</taxon>
        <taxon>Conifers I</taxon>
        <taxon>Pinales</taxon>
        <taxon>Pinaceae</taxon>
        <taxon>Pinus</taxon>
        <taxon>Pinus subgen. Pinus</taxon>
    </lineage>
</organism>